<name>POXO_PENOX</name>
<protein>
    <recommendedName>
        <fullName evidence="4">Hydrolyase poxO</fullName>
        <ecNumber evidence="3">3.7.1.-</ecNumber>
    </recommendedName>
    <alternativeName>
        <fullName evidence="4">Oxaleimides biosynthesis cluster protein O</fullName>
    </alternativeName>
</protein>
<comment type="function">
    <text evidence="3 6">Hydrolyase; part of the gene cluster that mediates the biosynthesis of oxaleimides, cytotoxic compounds containing an unusual disubstituted succinimide moiety (PubMed:28365998). The first step of the pathway is provided by the HR-PKS poxF that serves in a new mode of collaborative biosynthesis with the PKS-NRPS poxE, by providing the olefin containing amino acid substrate via the synthesis of an ACP-bound dec-4-enoate (PubMed:28365998). The cytochrome P450 monooxygenase poxM-catalyzed oxidation at the alpha-position creates the enzyme-bound 2-hydroxydec-4-enoyl-ACP thioester, which may be prone to spontaneous hydrolysis to yield 2-hydroxydec-4-enoic acid due to increased electrophilicity of the carbonyl (PubMed:28365998). 2-hydroxydec-4-enoic acid can then be further oxidized by poxM to yield the alpha-ketoacid 2-oxodec-4-enoicacid, which is reductively aminated by the aminotransferase poxL to yield (S,E)-2-aminodec-4-enoic acid (PubMed:28365998). The Hybrid PKS-NRPS synthetase poxE then performs condensation between the octaketide product of its PKS modules and the amino group of (S,E)-2-aminodec-4-enoic acid which is activated and incorporated by the adenylation domain (PubMed:28365998). The resulting aminoacyl product can be cyclized by the Diels-Alderase PoxQ and reductively released by the reductive (R) domain of poxE to yield an aldehyde intermediate (Probable) (PubMed:28365998). The released aldehyde is then substrate for a Knoevenagel condensation by the hydrolyase poxO followed by an oxidation at the 5-position of the pyrrolidone ring (PubMed:28365998). The presence of the olefin from the amino acid building block allows for migration of the substituted allyl group to occur (PubMed:28365998). This allylic transposition reaction takes place in a conjugate addition, semipinacol-like fashion to yield a succinimide intermediate (PubMed:28365998). Iterative two-electron oxidations of the C7 methyl of the succinimide intermediate to the carboxylic acid can be catalyzed by one of two remaining cytochrome P450 monooxygenasess poxC or poxD to yield oxaleimide A (PubMed:28365998). Subsequent oxidation yields the maleimide scaffold oxaleimide I (PubMed:28365998). Both oxaleimide A and oxaleimide I can undergo oxidative modifications in the decalin ring to yield the series of products oxaleimides B to H (PubMed:28365998).</text>
</comment>
<comment type="pathway">
    <text evidence="3">Secondary metabolite biosynthesis.</text>
</comment>
<comment type="subunit">
    <text evidence="2">Homodimer.</text>
</comment>
<comment type="induction">
    <text evidence="3">Expression is positively regulated by the oxaleimides biosynthesis cluster-specific transcription factor poxB.</text>
</comment>
<comment type="disruption phenotype">
    <text evidence="3">Impairs the productin of oxaleimides and leads to the accumulation of a trans-decalin containing alcohol intermediate.</text>
</comment>
<comment type="similarity">
    <text evidence="5">Belongs to the AB hydrolase superfamily. FUS2 hydrolase family.</text>
</comment>
<accession>A0A1W5T1Y7</accession>
<gene>
    <name evidence="4" type="primary">poxO</name>
</gene>
<organism>
    <name type="scientific">Penicillium oxalicum</name>
    <dbReference type="NCBI Taxonomy" id="69781"/>
    <lineage>
        <taxon>Eukaryota</taxon>
        <taxon>Fungi</taxon>
        <taxon>Dikarya</taxon>
        <taxon>Ascomycota</taxon>
        <taxon>Pezizomycotina</taxon>
        <taxon>Eurotiomycetes</taxon>
        <taxon>Eurotiomycetidae</taxon>
        <taxon>Eurotiales</taxon>
        <taxon>Aspergillaceae</taxon>
        <taxon>Penicillium</taxon>
    </lineage>
</organism>
<sequence>MHRFFKSEFFNFEFIRILSAAPYGGAEIAECLVAAGQITNDDPESWHRAWIIQADKAKALGDEALHSGDTVSARRAYLRASNYYRASGYMFHDRPGAPDARVLPLAQQVLDTYALTLPLLDTGEASQLKIPFENHQLAAYLYLPRDRTKPVPVLLSLGGADSIQEELYYVYAASGPQLGYAVLTFEGPGQGITLRRDKMHMRPDWEVVVGRVLDFLTAYMQQNPSVQLDLSRVAVVGASMGGYYALRAAADPRIGACVSIDPFYDMWDFVRNHVSPALLNAWNAGWVPSRVVNGIMSMAMAASFQAKWEVGLAMWFFGVDSPTQTLRHMMKYTLARADGTSRLDQVKCPVLVSGATQSLYLEPESDVLRVFDALAHLGDERREIWIARSPEEGGLQAKIGAIGLVVQRTFRFLDQHLNVTR</sequence>
<keyword id="KW-0378">Hydrolase</keyword>
<reference key="1">
    <citation type="journal article" date="2017" name="J. Am. Chem. Soc.">
        <title>Collaborative Biosynthesis of Maleimide- and Succinimide-Containing Natural Products by Fungal Polyketide Megasynthases.</title>
        <authorList>
            <person name="Sato M."/>
            <person name="Dander J.E."/>
            <person name="Sato C."/>
            <person name="Hung Y.S."/>
            <person name="Gao S.S."/>
            <person name="Tang M.C."/>
            <person name="Hang L."/>
            <person name="Winter J.M."/>
            <person name="Garg N.K."/>
            <person name="Watanabe K."/>
            <person name="Tang Y."/>
        </authorList>
    </citation>
    <scope>NUCLEOTIDE SEQUENCE [GENOMIC DNA]</scope>
    <scope>FUNCTION</scope>
    <scope>DISRUPTION PHENOTYPE</scope>
    <scope>INDUCTION</scope>
    <scope>PATHWAY</scope>
    <source>
        <strain>K85</strain>
    </source>
</reference>
<reference key="2">
    <citation type="journal article" date="2020" name="Chem. Commun. (Camb.)">
        <title>Evidence for enzyme catalysed intramolecular [4+2] Diels-Alder cyclization during the biosynthesis of pyrichalasin H.</title>
        <authorList>
            <person name="Hantke V."/>
            <person name="Skellam E.J."/>
            <person name="Cox R.J."/>
        </authorList>
    </citation>
    <scope>FUNCTION</scope>
</reference>
<dbReference type="EC" id="3.7.1.-" evidence="3"/>
<dbReference type="EMBL" id="KY764304">
    <property type="protein sequence ID" value="ARF05989.1"/>
    <property type="molecule type" value="Genomic_DNA"/>
</dbReference>
<dbReference type="SMR" id="A0A1W5T1Y7"/>
<dbReference type="ESTHER" id="penox-poxo">
    <property type="family name" value="Duf_1100-S"/>
</dbReference>
<dbReference type="GO" id="GO:0016787">
    <property type="term" value="F:hydrolase activity"/>
    <property type="evidence" value="ECO:0007669"/>
    <property type="project" value="UniProtKB-KW"/>
</dbReference>
<dbReference type="GO" id="GO:0017000">
    <property type="term" value="P:antibiotic biosynthetic process"/>
    <property type="evidence" value="ECO:0007669"/>
    <property type="project" value="UniProtKB-ARBA"/>
</dbReference>
<dbReference type="GO" id="GO:0072330">
    <property type="term" value="P:monocarboxylic acid biosynthetic process"/>
    <property type="evidence" value="ECO:0007669"/>
    <property type="project" value="UniProtKB-ARBA"/>
</dbReference>
<dbReference type="Gene3D" id="1.20.1440.110">
    <property type="entry name" value="acylaminoacyl peptidase"/>
    <property type="match status" value="1"/>
</dbReference>
<dbReference type="Gene3D" id="3.40.50.1820">
    <property type="entry name" value="alpha/beta hydrolase"/>
    <property type="match status" value="1"/>
</dbReference>
<dbReference type="InterPro" id="IPR029058">
    <property type="entry name" value="AB_hydrolase_fold"/>
</dbReference>
<dbReference type="InterPro" id="IPR010520">
    <property type="entry name" value="FrsA-like"/>
</dbReference>
<dbReference type="InterPro" id="IPR050261">
    <property type="entry name" value="FrsA_esterase"/>
</dbReference>
<dbReference type="PANTHER" id="PTHR22946:SF13">
    <property type="entry name" value="ALPHA_BETA HYDROLASE PSOB"/>
    <property type="match status" value="1"/>
</dbReference>
<dbReference type="PANTHER" id="PTHR22946">
    <property type="entry name" value="DIENELACTONE HYDROLASE DOMAIN-CONTAINING PROTEIN-RELATED"/>
    <property type="match status" value="1"/>
</dbReference>
<dbReference type="Pfam" id="PF06500">
    <property type="entry name" value="FrsA-like"/>
    <property type="match status" value="1"/>
</dbReference>
<dbReference type="SUPFAM" id="SSF53474">
    <property type="entry name" value="alpha/beta-Hydrolases"/>
    <property type="match status" value="1"/>
</dbReference>
<proteinExistence type="evidence at transcript level"/>
<evidence type="ECO:0000250" key="1">
    <source>
        <dbReference type="UniProtKB" id="Q4WZB3"/>
    </source>
</evidence>
<evidence type="ECO:0000250" key="2">
    <source>
        <dbReference type="UniProtKB" id="Q93NG6"/>
    </source>
</evidence>
<evidence type="ECO:0000269" key="3">
    <source>
    </source>
</evidence>
<evidence type="ECO:0000303" key="4">
    <source>
    </source>
</evidence>
<evidence type="ECO:0000305" key="5"/>
<evidence type="ECO:0000305" key="6">
    <source>
    </source>
</evidence>
<feature type="chain" id="PRO_0000453777" description="Hydrolyase poxO">
    <location>
        <begin position="1"/>
        <end position="421"/>
    </location>
</feature>
<feature type="active site" description="Nucleophile" evidence="1">
    <location>
        <position position="239"/>
    </location>
</feature>